<accession>O84711</accession>
<name>CLPX_CHLTR</name>
<reference key="1">
    <citation type="journal article" date="1998" name="Science">
        <title>Genome sequence of an obligate intracellular pathogen of humans: Chlamydia trachomatis.</title>
        <authorList>
            <person name="Stephens R.S."/>
            <person name="Kalman S."/>
            <person name="Lammel C.J."/>
            <person name="Fan J."/>
            <person name="Marathe R."/>
            <person name="Aravind L."/>
            <person name="Mitchell W.P."/>
            <person name="Olinger L."/>
            <person name="Tatusov R.L."/>
            <person name="Zhao Q."/>
            <person name="Koonin E.V."/>
            <person name="Davis R.W."/>
        </authorList>
    </citation>
    <scope>NUCLEOTIDE SEQUENCE [LARGE SCALE GENOMIC DNA]</scope>
    <source>
        <strain>ATCC VR-885 / DSM 19411 / UW-3/Cx</strain>
    </source>
</reference>
<protein>
    <recommendedName>
        <fullName evidence="1">ATP-dependent Clp protease ATP-binding subunit ClpX</fullName>
    </recommendedName>
</protein>
<comment type="function">
    <text evidence="1">ATP-dependent specificity component of the Clp protease. It directs the protease to specific substrates. Can perform chaperone functions in the absence of ClpP.</text>
</comment>
<comment type="subunit">
    <text evidence="1">Component of the ClpX-ClpP complex. Forms a hexameric ring that, in the presence of ATP, binds to fourteen ClpP subunits assembled into a disk-like structure with a central cavity, resembling the structure of eukaryotic proteasomes.</text>
</comment>
<comment type="similarity">
    <text evidence="1">Belongs to the ClpX chaperone family.</text>
</comment>
<organism>
    <name type="scientific">Chlamydia trachomatis serovar D (strain ATCC VR-885 / DSM 19411 / UW-3/Cx)</name>
    <dbReference type="NCBI Taxonomy" id="272561"/>
    <lineage>
        <taxon>Bacteria</taxon>
        <taxon>Pseudomonadati</taxon>
        <taxon>Chlamydiota</taxon>
        <taxon>Chlamydiia</taxon>
        <taxon>Chlamydiales</taxon>
        <taxon>Chlamydiaceae</taxon>
        <taxon>Chlamydia/Chlamydophila group</taxon>
        <taxon>Chlamydia</taxon>
    </lineage>
</organism>
<sequence length="419" mass="46139">MTKKNLAVCSFCGRSEKDVEKLIAGPSVYICDYCIKLCSGILDKTPAPATQEIATSSTSSPTSLRVLTPKEIKRHIDSYVIGQERAKKTISVAVYNHYKRIRALMQDKQVSYGKSNVLLLGPTGSGKTLIAKTLAKILDVPFTIADATTLTEAGYVGEDVENIVLRLLQAADYDVARAERGIIYIDEIDKIGRTTANVSITRDVSGEGVQQALLKIIEGTVANIPPKGGRKHPNQEYIRVNTENILFIVGGAFVNLDKIIAKRLGRTTIGFSEETDLAVTNRDHLLAKVETEDLIAFGMIPEFIGRFNCVVNCEELTLDELVEILTEPANAIVKQYTELFEEENVKLIFEKEALYAIAQKAKQAKTGARALGMILENLLRDLMFEIPSDPTVEAIRIEEDTITQNKPPVIIQKSPEAIA</sequence>
<gene>
    <name evidence="1" type="primary">clpX</name>
    <name type="ordered locus">CT_705</name>
</gene>
<evidence type="ECO:0000255" key="1">
    <source>
        <dbReference type="HAMAP-Rule" id="MF_00175"/>
    </source>
</evidence>
<evidence type="ECO:0000255" key="2">
    <source>
        <dbReference type="PROSITE-ProRule" id="PRU01250"/>
    </source>
</evidence>
<keyword id="KW-0067">ATP-binding</keyword>
<keyword id="KW-0143">Chaperone</keyword>
<keyword id="KW-0479">Metal-binding</keyword>
<keyword id="KW-0547">Nucleotide-binding</keyword>
<keyword id="KW-1185">Reference proteome</keyword>
<keyword id="KW-0862">Zinc</keyword>
<feature type="chain" id="PRO_0000160340" description="ATP-dependent Clp protease ATP-binding subunit ClpX">
    <location>
        <begin position="1"/>
        <end position="419"/>
    </location>
</feature>
<feature type="domain" description="ClpX-type ZB" evidence="2">
    <location>
        <begin position="1"/>
        <end position="50"/>
    </location>
</feature>
<feature type="binding site" evidence="2">
    <location>
        <position position="9"/>
    </location>
    <ligand>
        <name>Zn(2+)</name>
        <dbReference type="ChEBI" id="CHEBI:29105"/>
    </ligand>
</feature>
<feature type="binding site" evidence="2">
    <location>
        <position position="12"/>
    </location>
    <ligand>
        <name>Zn(2+)</name>
        <dbReference type="ChEBI" id="CHEBI:29105"/>
    </ligand>
</feature>
<feature type="binding site" evidence="2">
    <location>
        <position position="31"/>
    </location>
    <ligand>
        <name>Zn(2+)</name>
        <dbReference type="ChEBI" id="CHEBI:29105"/>
    </ligand>
</feature>
<feature type="binding site" evidence="2">
    <location>
        <position position="34"/>
    </location>
    <ligand>
        <name>Zn(2+)</name>
        <dbReference type="ChEBI" id="CHEBI:29105"/>
    </ligand>
</feature>
<feature type="binding site" evidence="1">
    <location>
        <begin position="122"/>
        <end position="129"/>
    </location>
    <ligand>
        <name>ATP</name>
        <dbReference type="ChEBI" id="CHEBI:30616"/>
    </ligand>
</feature>
<dbReference type="EMBL" id="AE001273">
    <property type="protein sequence ID" value="AAC68300.1"/>
    <property type="molecule type" value="Genomic_DNA"/>
</dbReference>
<dbReference type="PIR" id="B71481">
    <property type="entry name" value="B71481"/>
</dbReference>
<dbReference type="RefSeq" id="NP_220224.1">
    <property type="nucleotide sequence ID" value="NC_000117.1"/>
</dbReference>
<dbReference type="RefSeq" id="WP_009872080.1">
    <property type="nucleotide sequence ID" value="NC_000117.1"/>
</dbReference>
<dbReference type="SMR" id="O84711"/>
<dbReference type="FunCoup" id="O84711">
    <property type="interactions" value="208"/>
</dbReference>
<dbReference type="STRING" id="272561.CT_705"/>
<dbReference type="EnsemblBacteria" id="AAC68300">
    <property type="protein sequence ID" value="AAC68300"/>
    <property type="gene ID" value="CT_705"/>
</dbReference>
<dbReference type="GeneID" id="884500"/>
<dbReference type="KEGG" id="ctr:CT_705"/>
<dbReference type="PATRIC" id="fig|272561.5.peg.776"/>
<dbReference type="HOGENOM" id="CLU_014218_8_2_0"/>
<dbReference type="InParanoid" id="O84711"/>
<dbReference type="OrthoDB" id="9804062at2"/>
<dbReference type="Proteomes" id="UP000000431">
    <property type="component" value="Chromosome"/>
</dbReference>
<dbReference type="GO" id="GO:0009376">
    <property type="term" value="C:HslUV protease complex"/>
    <property type="evidence" value="ECO:0000318"/>
    <property type="project" value="GO_Central"/>
</dbReference>
<dbReference type="GO" id="GO:0005524">
    <property type="term" value="F:ATP binding"/>
    <property type="evidence" value="ECO:0000318"/>
    <property type="project" value="GO_Central"/>
</dbReference>
<dbReference type="GO" id="GO:0016887">
    <property type="term" value="F:ATP hydrolysis activity"/>
    <property type="evidence" value="ECO:0000318"/>
    <property type="project" value="GO_Central"/>
</dbReference>
<dbReference type="GO" id="GO:0140662">
    <property type="term" value="F:ATP-dependent protein folding chaperone"/>
    <property type="evidence" value="ECO:0007669"/>
    <property type="project" value="InterPro"/>
</dbReference>
<dbReference type="GO" id="GO:0046983">
    <property type="term" value="F:protein dimerization activity"/>
    <property type="evidence" value="ECO:0007669"/>
    <property type="project" value="InterPro"/>
</dbReference>
<dbReference type="GO" id="GO:0051082">
    <property type="term" value="F:unfolded protein binding"/>
    <property type="evidence" value="ECO:0007669"/>
    <property type="project" value="UniProtKB-UniRule"/>
</dbReference>
<dbReference type="GO" id="GO:0008270">
    <property type="term" value="F:zinc ion binding"/>
    <property type="evidence" value="ECO:0007669"/>
    <property type="project" value="InterPro"/>
</dbReference>
<dbReference type="GO" id="GO:0051301">
    <property type="term" value="P:cell division"/>
    <property type="evidence" value="ECO:0000318"/>
    <property type="project" value="GO_Central"/>
</dbReference>
<dbReference type="GO" id="GO:0051603">
    <property type="term" value="P:proteolysis involved in protein catabolic process"/>
    <property type="evidence" value="ECO:0000318"/>
    <property type="project" value="GO_Central"/>
</dbReference>
<dbReference type="CDD" id="cd19497">
    <property type="entry name" value="RecA-like_ClpX"/>
    <property type="match status" value="1"/>
</dbReference>
<dbReference type="FunFam" id="1.10.8.60:FF:000002">
    <property type="entry name" value="ATP-dependent Clp protease ATP-binding subunit ClpX"/>
    <property type="match status" value="1"/>
</dbReference>
<dbReference type="FunFam" id="3.40.50.300:FF:000005">
    <property type="entry name" value="ATP-dependent Clp protease ATP-binding subunit ClpX"/>
    <property type="match status" value="1"/>
</dbReference>
<dbReference type="Gene3D" id="1.10.8.60">
    <property type="match status" value="1"/>
</dbReference>
<dbReference type="Gene3D" id="6.20.220.10">
    <property type="entry name" value="ClpX chaperone, C4-type zinc finger domain"/>
    <property type="match status" value="1"/>
</dbReference>
<dbReference type="Gene3D" id="3.40.50.300">
    <property type="entry name" value="P-loop containing nucleotide triphosphate hydrolases"/>
    <property type="match status" value="1"/>
</dbReference>
<dbReference type="HAMAP" id="MF_00175">
    <property type="entry name" value="ClpX"/>
    <property type="match status" value="1"/>
</dbReference>
<dbReference type="InterPro" id="IPR003593">
    <property type="entry name" value="AAA+_ATPase"/>
</dbReference>
<dbReference type="InterPro" id="IPR050052">
    <property type="entry name" value="ATP-dep_Clp_protease_ClpX"/>
</dbReference>
<dbReference type="InterPro" id="IPR003959">
    <property type="entry name" value="ATPase_AAA_core"/>
</dbReference>
<dbReference type="InterPro" id="IPR019489">
    <property type="entry name" value="Clp_ATPase_C"/>
</dbReference>
<dbReference type="InterPro" id="IPR004487">
    <property type="entry name" value="Clp_protease_ATP-bd_su_ClpX"/>
</dbReference>
<dbReference type="InterPro" id="IPR046425">
    <property type="entry name" value="ClpX_bact"/>
</dbReference>
<dbReference type="InterPro" id="IPR027417">
    <property type="entry name" value="P-loop_NTPase"/>
</dbReference>
<dbReference type="InterPro" id="IPR010603">
    <property type="entry name" value="Znf_CppX_C4"/>
</dbReference>
<dbReference type="InterPro" id="IPR038366">
    <property type="entry name" value="Znf_CppX_C4_sf"/>
</dbReference>
<dbReference type="NCBIfam" id="TIGR00382">
    <property type="entry name" value="clpX"/>
    <property type="match status" value="1"/>
</dbReference>
<dbReference type="NCBIfam" id="NF003745">
    <property type="entry name" value="PRK05342.1"/>
    <property type="match status" value="1"/>
</dbReference>
<dbReference type="PANTHER" id="PTHR48102:SF7">
    <property type="entry name" value="ATP-DEPENDENT CLP PROTEASE ATP-BINDING SUBUNIT CLPX-LIKE, MITOCHONDRIAL"/>
    <property type="match status" value="1"/>
</dbReference>
<dbReference type="PANTHER" id="PTHR48102">
    <property type="entry name" value="ATP-DEPENDENT CLP PROTEASE ATP-BINDING SUBUNIT CLPX-LIKE, MITOCHONDRIAL-RELATED"/>
    <property type="match status" value="1"/>
</dbReference>
<dbReference type="Pfam" id="PF07724">
    <property type="entry name" value="AAA_2"/>
    <property type="match status" value="1"/>
</dbReference>
<dbReference type="Pfam" id="PF10431">
    <property type="entry name" value="ClpB_D2-small"/>
    <property type="match status" value="1"/>
</dbReference>
<dbReference type="Pfam" id="PF06689">
    <property type="entry name" value="zf-C4_ClpX"/>
    <property type="match status" value="1"/>
</dbReference>
<dbReference type="SMART" id="SM00382">
    <property type="entry name" value="AAA"/>
    <property type="match status" value="1"/>
</dbReference>
<dbReference type="SMART" id="SM01086">
    <property type="entry name" value="ClpB_D2-small"/>
    <property type="match status" value="1"/>
</dbReference>
<dbReference type="SMART" id="SM00994">
    <property type="entry name" value="zf-C4_ClpX"/>
    <property type="match status" value="1"/>
</dbReference>
<dbReference type="SUPFAM" id="SSF57716">
    <property type="entry name" value="Glucocorticoid receptor-like (DNA-binding domain)"/>
    <property type="match status" value="1"/>
</dbReference>
<dbReference type="SUPFAM" id="SSF52540">
    <property type="entry name" value="P-loop containing nucleoside triphosphate hydrolases"/>
    <property type="match status" value="1"/>
</dbReference>
<dbReference type="PROSITE" id="PS51902">
    <property type="entry name" value="CLPX_ZB"/>
    <property type="match status" value="1"/>
</dbReference>
<proteinExistence type="inferred from homology"/>